<evidence type="ECO:0000255" key="1">
    <source>
        <dbReference type="HAMAP-Rule" id="MF_00203"/>
    </source>
</evidence>
<evidence type="ECO:0000256" key="2">
    <source>
        <dbReference type="SAM" id="MobiDB-lite"/>
    </source>
</evidence>
<dbReference type="EMBL" id="AP008957">
    <property type="protein sequence ID" value="BAH33733.1"/>
    <property type="molecule type" value="Genomic_DNA"/>
</dbReference>
<dbReference type="RefSeq" id="WP_020907712.1">
    <property type="nucleotide sequence ID" value="NC_012490.1"/>
</dbReference>
<dbReference type="SMR" id="C0ZZE8"/>
<dbReference type="KEGG" id="rer:RER_30250"/>
<dbReference type="PATRIC" id="fig|234621.6.peg.3526"/>
<dbReference type="eggNOG" id="COG0322">
    <property type="taxonomic scope" value="Bacteria"/>
</dbReference>
<dbReference type="HOGENOM" id="CLU_014841_3_2_11"/>
<dbReference type="Proteomes" id="UP000002204">
    <property type="component" value="Chromosome"/>
</dbReference>
<dbReference type="GO" id="GO:0005737">
    <property type="term" value="C:cytoplasm"/>
    <property type="evidence" value="ECO:0007669"/>
    <property type="project" value="UniProtKB-SubCell"/>
</dbReference>
<dbReference type="GO" id="GO:0009380">
    <property type="term" value="C:excinuclease repair complex"/>
    <property type="evidence" value="ECO:0007669"/>
    <property type="project" value="InterPro"/>
</dbReference>
<dbReference type="GO" id="GO:0003677">
    <property type="term" value="F:DNA binding"/>
    <property type="evidence" value="ECO:0007669"/>
    <property type="project" value="UniProtKB-UniRule"/>
</dbReference>
<dbReference type="GO" id="GO:0009381">
    <property type="term" value="F:excinuclease ABC activity"/>
    <property type="evidence" value="ECO:0007669"/>
    <property type="project" value="UniProtKB-UniRule"/>
</dbReference>
<dbReference type="GO" id="GO:0006289">
    <property type="term" value="P:nucleotide-excision repair"/>
    <property type="evidence" value="ECO:0007669"/>
    <property type="project" value="UniProtKB-UniRule"/>
</dbReference>
<dbReference type="GO" id="GO:0009432">
    <property type="term" value="P:SOS response"/>
    <property type="evidence" value="ECO:0007669"/>
    <property type="project" value="UniProtKB-UniRule"/>
</dbReference>
<dbReference type="CDD" id="cd10434">
    <property type="entry name" value="GIY-YIG_UvrC_Cho"/>
    <property type="match status" value="1"/>
</dbReference>
<dbReference type="FunFam" id="3.40.1440.10:FF:000001">
    <property type="entry name" value="UvrABC system protein C"/>
    <property type="match status" value="1"/>
</dbReference>
<dbReference type="FunFam" id="4.10.860.10:FF:000002">
    <property type="entry name" value="UvrABC system protein C"/>
    <property type="match status" value="1"/>
</dbReference>
<dbReference type="Gene3D" id="1.10.150.20">
    <property type="entry name" value="5' to 3' exonuclease, C-terminal subdomain"/>
    <property type="match status" value="1"/>
</dbReference>
<dbReference type="Gene3D" id="3.40.1440.10">
    <property type="entry name" value="GIY-YIG endonuclease"/>
    <property type="match status" value="1"/>
</dbReference>
<dbReference type="Gene3D" id="4.10.860.10">
    <property type="entry name" value="UVR domain"/>
    <property type="match status" value="1"/>
</dbReference>
<dbReference type="Gene3D" id="3.30.420.340">
    <property type="entry name" value="UvrC, RNAse H endonuclease domain"/>
    <property type="match status" value="1"/>
</dbReference>
<dbReference type="HAMAP" id="MF_00203">
    <property type="entry name" value="UvrC"/>
    <property type="match status" value="1"/>
</dbReference>
<dbReference type="InterPro" id="IPR000305">
    <property type="entry name" value="GIY-YIG_endonuc"/>
</dbReference>
<dbReference type="InterPro" id="IPR035901">
    <property type="entry name" value="GIY-YIG_endonuc_sf"/>
</dbReference>
<dbReference type="InterPro" id="IPR047296">
    <property type="entry name" value="GIY-YIG_UvrC_Cho"/>
</dbReference>
<dbReference type="InterPro" id="IPR003583">
    <property type="entry name" value="Hlx-hairpin-Hlx_DNA-bd_motif"/>
</dbReference>
<dbReference type="InterPro" id="IPR010994">
    <property type="entry name" value="RuvA_2-like"/>
</dbReference>
<dbReference type="InterPro" id="IPR001943">
    <property type="entry name" value="UVR_dom"/>
</dbReference>
<dbReference type="InterPro" id="IPR036876">
    <property type="entry name" value="UVR_dom_sf"/>
</dbReference>
<dbReference type="InterPro" id="IPR050066">
    <property type="entry name" value="UvrABC_protein_C"/>
</dbReference>
<dbReference type="InterPro" id="IPR004791">
    <property type="entry name" value="UvrC"/>
</dbReference>
<dbReference type="InterPro" id="IPR001162">
    <property type="entry name" value="UvrC_RNase_H_dom"/>
</dbReference>
<dbReference type="InterPro" id="IPR038476">
    <property type="entry name" value="UvrC_RNase_H_dom_sf"/>
</dbReference>
<dbReference type="NCBIfam" id="NF001824">
    <property type="entry name" value="PRK00558.1-5"/>
    <property type="match status" value="1"/>
</dbReference>
<dbReference type="NCBIfam" id="TIGR00194">
    <property type="entry name" value="uvrC"/>
    <property type="match status" value="1"/>
</dbReference>
<dbReference type="PANTHER" id="PTHR30562:SF1">
    <property type="entry name" value="UVRABC SYSTEM PROTEIN C"/>
    <property type="match status" value="1"/>
</dbReference>
<dbReference type="PANTHER" id="PTHR30562">
    <property type="entry name" value="UVRC/OXIDOREDUCTASE"/>
    <property type="match status" value="1"/>
</dbReference>
<dbReference type="Pfam" id="PF01541">
    <property type="entry name" value="GIY-YIG"/>
    <property type="match status" value="1"/>
</dbReference>
<dbReference type="Pfam" id="PF14520">
    <property type="entry name" value="HHH_5"/>
    <property type="match status" value="1"/>
</dbReference>
<dbReference type="Pfam" id="PF02151">
    <property type="entry name" value="UVR"/>
    <property type="match status" value="1"/>
</dbReference>
<dbReference type="Pfam" id="PF22920">
    <property type="entry name" value="UvrC_RNaseH"/>
    <property type="match status" value="1"/>
</dbReference>
<dbReference type="Pfam" id="PF08459">
    <property type="entry name" value="UvrC_RNaseH_dom"/>
    <property type="match status" value="1"/>
</dbReference>
<dbReference type="SMART" id="SM00465">
    <property type="entry name" value="GIYc"/>
    <property type="match status" value="1"/>
</dbReference>
<dbReference type="SMART" id="SM00278">
    <property type="entry name" value="HhH1"/>
    <property type="match status" value="2"/>
</dbReference>
<dbReference type="SUPFAM" id="SSF46600">
    <property type="entry name" value="C-terminal UvrC-binding domain of UvrB"/>
    <property type="match status" value="1"/>
</dbReference>
<dbReference type="SUPFAM" id="SSF82771">
    <property type="entry name" value="GIY-YIG endonuclease"/>
    <property type="match status" value="1"/>
</dbReference>
<dbReference type="SUPFAM" id="SSF47781">
    <property type="entry name" value="RuvA domain 2-like"/>
    <property type="match status" value="1"/>
</dbReference>
<dbReference type="PROSITE" id="PS50164">
    <property type="entry name" value="GIY_YIG"/>
    <property type="match status" value="1"/>
</dbReference>
<dbReference type="PROSITE" id="PS50151">
    <property type="entry name" value="UVR"/>
    <property type="match status" value="1"/>
</dbReference>
<dbReference type="PROSITE" id="PS50165">
    <property type="entry name" value="UVRC"/>
    <property type="match status" value="1"/>
</dbReference>
<gene>
    <name evidence="1" type="primary">uvrC</name>
    <name type="ordered locus">RER_30250</name>
</gene>
<sequence length="730" mass="79348">MPDPSTYRPATGTIPAAPGVYKFRDPHGRVIYVGKAKSLRSRLNSYFADVTTLHPRTRQMVTTAGSVEWTVVSTEVEALQLEYNWIKEFDPRFNVRYRDDKTYPVLAVTLNEEFPRLFVYRGPRRKGVRYFGPYSHAWAIRETLDLLLRVFPARTCSSGVFKRHNQIGRPCLLGYIDKCSAPCVGRVSAEEHRQIVEDFCDFLAGRTDKLVKDLEKRMQQASEDLDFETAARLRDDIGALRKALEKQAVVLGDGTDADLVAFATDDLEAAVQVFHVRGGRVRGQRGWVVEKAGDAIDWAALDAESDLPILVEQFLTQFYGEQAALDPGAGSEAGISAVPKEVLVPVLPANATEIQAWLSKLRGSQVQLRVPQRGDKKDLAETVQRNAKEALAQHKLKRAGDFTSRSAALQGIQEALDLDSAPLRIECIDISHVQGTDVVASLVVFEDGLPRKSDYRHYAIKEAAGDGHSDDVASIAEITRRRFIRHNRDLGILAASASTMDADGGDLAPEAAIDPATGRPRRFAYPPNLFVVDGGAPQVTAAAAVLDELGVTDVAVVGLAKRLEEVWVPGEEDPVILPRTSESLYLLQRIRDEAHRFAITFHRSKRSRRMTASALDSVKGLGETRRTALVAHFGSVAKLKTATVEEIMQVPGIGETTATAVLAALGTDSAAADAGAEARALPAAVGDDELDKESESSVTSADAPSAESGSGDEGSESRELSMPTTGPSAQ</sequence>
<comment type="function">
    <text evidence="1">The UvrABC repair system catalyzes the recognition and processing of DNA lesions. UvrC both incises the 5' and 3' sides of the lesion. The N-terminal half is responsible for the 3' incision and the C-terminal half is responsible for the 5' incision.</text>
</comment>
<comment type="subunit">
    <text evidence="1">Interacts with UvrB in an incision complex.</text>
</comment>
<comment type="subcellular location">
    <subcellularLocation>
        <location evidence="1">Cytoplasm</location>
    </subcellularLocation>
</comment>
<comment type="similarity">
    <text evidence="1">Belongs to the UvrC family.</text>
</comment>
<keyword id="KW-0963">Cytoplasm</keyword>
<keyword id="KW-0227">DNA damage</keyword>
<keyword id="KW-0228">DNA excision</keyword>
<keyword id="KW-0234">DNA repair</keyword>
<keyword id="KW-0267">Excision nuclease</keyword>
<keyword id="KW-0742">SOS response</keyword>
<organism>
    <name type="scientific">Rhodococcus erythropolis (strain PR4 / NBRC 100887)</name>
    <dbReference type="NCBI Taxonomy" id="234621"/>
    <lineage>
        <taxon>Bacteria</taxon>
        <taxon>Bacillati</taxon>
        <taxon>Actinomycetota</taxon>
        <taxon>Actinomycetes</taxon>
        <taxon>Mycobacteriales</taxon>
        <taxon>Nocardiaceae</taxon>
        <taxon>Rhodococcus</taxon>
        <taxon>Rhodococcus erythropolis group</taxon>
    </lineage>
</organism>
<protein>
    <recommendedName>
        <fullName evidence="1">UvrABC system protein C</fullName>
        <shortName evidence="1">Protein UvrC</shortName>
    </recommendedName>
    <alternativeName>
        <fullName evidence="1">Excinuclease ABC subunit C</fullName>
    </alternativeName>
</protein>
<proteinExistence type="inferred from homology"/>
<accession>C0ZZE8</accession>
<feature type="chain" id="PRO_1000204125" description="UvrABC system protein C">
    <location>
        <begin position="1"/>
        <end position="730"/>
    </location>
</feature>
<feature type="domain" description="GIY-YIG" evidence="1">
    <location>
        <begin position="16"/>
        <end position="95"/>
    </location>
</feature>
<feature type="domain" description="UVR" evidence="1">
    <location>
        <begin position="208"/>
        <end position="243"/>
    </location>
</feature>
<feature type="region of interest" description="Disordered" evidence="2">
    <location>
        <begin position="678"/>
        <end position="730"/>
    </location>
</feature>
<reference key="1">
    <citation type="submission" date="2005-03" db="EMBL/GenBank/DDBJ databases">
        <title>Comparison of the complete genome sequences of Rhodococcus erythropolis PR4 and Rhodococcus opacus B4.</title>
        <authorList>
            <person name="Takarada H."/>
            <person name="Sekine M."/>
            <person name="Hosoyama A."/>
            <person name="Yamada R."/>
            <person name="Fujisawa T."/>
            <person name="Omata S."/>
            <person name="Shimizu A."/>
            <person name="Tsukatani N."/>
            <person name="Tanikawa S."/>
            <person name="Fujita N."/>
            <person name="Harayama S."/>
        </authorList>
    </citation>
    <scope>NUCLEOTIDE SEQUENCE [LARGE SCALE GENOMIC DNA]</scope>
    <source>
        <strain>PR4 / NBRC 100887</strain>
    </source>
</reference>
<name>UVRC_RHOE4</name>